<keyword id="KW-0090">Biological rhythms</keyword>
<keyword id="KW-1003">Cell membrane</keyword>
<keyword id="KW-0217">Developmental protein</keyword>
<keyword id="KW-0221">Differentiation</keyword>
<keyword id="KW-1015">Disulfide bond</keyword>
<keyword id="KW-0297">G-protein coupled receptor</keyword>
<keyword id="KW-0325">Glycoprotein</keyword>
<keyword id="KW-0391">Immunity</keyword>
<keyword id="KW-0399">Innate immunity</keyword>
<keyword id="KW-0433">Leucine-rich repeat</keyword>
<keyword id="KW-0472">Membrane</keyword>
<keyword id="KW-0597">Phosphoprotein</keyword>
<keyword id="KW-0675">Receptor</keyword>
<keyword id="KW-1185">Reference proteome</keyword>
<keyword id="KW-0677">Repeat</keyword>
<keyword id="KW-0732">Signal</keyword>
<keyword id="KW-0744">Spermatogenesis</keyword>
<keyword id="KW-0807">Transducer</keyword>
<keyword id="KW-0812">Transmembrane</keyword>
<keyword id="KW-1133">Transmembrane helix</keyword>
<keyword id="KW-0879">Wnt signaling pathway</keyword>
<comment type="function">
    <text evidence="1 2">Receptor for R-spondins that potentiates the canonical Wnt signaling pathway and is involved in the formation of various organs. Upon binding to R-spondins (RSPO1, RSPO2, RSPO3 or RSPO4), associates with phosphorylated LRP6 and frizzled receptors that are activated by extracellular Wnt receptors, triggering the canonical Wnt signaling pathway to increase expression of target genes. In contrast to classical G-protein coupled receptors, does not activate heterotrimeric G-proteins to transduce the signal. Its function as activator of the Wnt signaling pathway is required for the development of various organs, including liver, kidney, intestine, bone, reproductive tract and eye. May also act as a receptor for norrin (NDP), such results however required additional confirmation in vivo. Required during spermatogenesis to activate the Wnt signaling pathway in peritubular myoid cells. Required for the maintenance of intestinal stem cells and Paneth cell differentiation in postnatal intestinal crypts. Acts as a regulator of bone formation and remodeling. Involved in kidney development; required for maintaining the ureteric bud in an undifferentiated state. Involved in the development of the anterior segment of the eye. Required during erythropoiesis. Also acts as a negative regulator of innate immunity by inhibiting TLR2/TLR4 associated pattern-recognition and pro-inflammatory cytokine production. Plays an important role in regulating the circadian rhythms of plasma lipids, partially through regulating the rhythmic expression of MTTP. Required for proper development of GnRH neurons (gonadotropin-releasing hormone expressing neurons) that control the release of reproductive hormones from the pituitary gland (By similarity).</text>
</comment>
<comment type="subcellular location">
    <subcellularLocation>
        <location evidence="2">Cell membrane</location>
        <topology evidence="2">Multi-pass membrane protein</topology>
    </subcellularLocation>
</comment>
<comment type="similarity">
    <text evidence="4">Belongs to the G-protein coupled receptor 1 family.</text>
</comment>
<sequence length="951" mass="104466">MPGPLGLLCFLALGLRGSAEPSGAAPPLCAAPCSCDGDRRVDCSGKGLTAVPEGLSAFTQLLDISMNNITQLPEDAFKNFPFLEELRLAGNDLSFIHPKALSGLKELKVLTLQNNQLKTVPSEAIRGLSSLQSLRLDANHITSVPEDSFEGLTQLRHLWLDDNSLTEVPVHPLSNLPTLQALTLALNKISSIPDFAFTNLSSLVVLHLHNNKIKSLGQHCFDGLDNLETLDLNYNNLGEFPQAIKALPSLKELLFHSNSISVIPDGAFDGNPLLKTIHLYDNPLSFVGNSAFHNLSELHSLVIRGASMVQRFPNLTGTVRLESLTLTGTKISSISNNLCQEQKRLRTLDLSYNSIKDLPSFNGCHALEEISLQRNQIHQIKEDTFQGLTSLKILDLSRNLIHEIDDRAFAKLGSITNLDVSFNELTSFPTEGLNGLNQLKLVGNFKLKEALAAKDFVNLRSLSVPYAYQCCAFWGCDSYTHSNTEDNSLQDHSGSKDKGLSDVAGVTSSAENEEHSQIIIHCTPSTGAFKPCEYLLGSWMIRLTVWFIFLVALFFNLLVILTTFASCTSVPSSKLFIGLISVSNLFMGAYTGILTFLDAVSWGRFAEFGIWWEIGSGCKIAGFLAVFSSESAIFLLMLAAVERSLSAKDMMKNGKSNHLRQFRIAALLAFLGAAVAGSFPLFHRGEYSASPLCLPFPTGETPSLGFTVTLVLLNSLAFLLMAIIYTKLYCNLEKEDLSESSQSSMIKHVAWLIFTNCIFFCPVAFFSFAPLITAVSISPEIMKSVTLIFFPLPACLNPVLYVFFNPKFKEDWKLLKRHVSKKSGSASVSISSQAGCVEQDFYYDCGMYSHLQGNLTVCDCCEAFLLTKPVSCKHLIKSHSCPALTVGSCQRPDGYWSDCGTQSAHSDYADEEDSFVSDSSDQVQACGRACFYQSRGFPLVRYAYNLPRVKD</sequence>
<accession>F1MLX5</accession>
<feature type="signal peptide" evidence="3">
    <location>
        <begin position="1"/>
        <end position="19"/>
    </location>
</feature>
<feature type="chain" id="PRO_0000422814" description="Leucine-rich repeat-containing G-protein coupled receptor 4">
    <location>
        <begin position="20"/>
        <end position="951"/>
    </location>
</feature>
<feature type="topological domain" description="Extracellular" evidence="3">
    <location>
        <begin position="20"/>
        <end position="544"/>
    </location>
</feature>
<feature type="transmembrane region" description="Helical; Name=1" evidence="3">
    <location>
        <begin position="545"/>
        <end position="565"/>
    </location>
</feature>
<feature type="topological domain" description="Cytoplasmic" evidence="3">
    <location>
        <begin position="566"/>
        <end position="575"/>
    </location>
</feature>
<feature type="transmembrane region" description="Helical; Name=2" evidence="3">
    <location>
        <begin position="576"/>
        <end position="596"/>
    </location>
</feature>
<feature type="topological domain" description="Extracellular" evidence="3">
    <location>
        <begin position="597"/>
        <end position="619"/>
    </location>
</feature>
<feature type="transmembrane region" description="Helical; Name=3" evidence="3">
    <location>
        <begin position="620"/>
        <end position="640"/>
    </location>
</feature>
<feature type="topological domain" description="Cytoplasmic" evidence="3">
    <location>
        <begin position="641"/>
        <end position="661"/>
    </location>
</feature>
<feature type="transmembrane region" description="Helical; Name=4" evidence="3">
    <location>
        <begin position="662"/>
        <end position="682"/>
    </location>
</feature>
<feature type="topological domain" description="Extracellular" evidence="3">
    <location>
        <begin position="683"/>
        <end position="703"/>
    </location>
</feature>
<feature type="transmembrane region" description="Helical; Name=5" evidence="3">
    <location>
        <begin position="704"/>
        <end position="724"/>
    </location>
</feature>
<feature type="topological domain" description="Cytoplasmic" evidence="3">
    <location>
        <begin position="725"/>
        <end position="756"/>
    </location>
</feature>
<feature type="transmembrane region" description="Helical; Name=6" evidence="3">
    <location>
        <begin position="757"/>
        <end position="777"/>
    </location>
</feature>
<feature type="topological domain" description="Extracellular" evidence="3">
    <location>
        <begin position="778"/>
        <end position="783"/>
    </location>
</feature>
<feature type="transmembrane region" description="Helical; Name=7" evidence="3">
    <location>
        <begin position="784"/>
        <end position="804"/>
    </location>
</feature>
<feature type="topological domain" description="Cytoplasmic" evidence="3">
    <location>
        <begin position="805"/>
        <end position="951"/>
    </location>
</feature>
<feature type="domain" description="LRRNT">
    <location>
        <begin position="25"/>
        <end position="57"/>
    </location>
</feature>
<feature type="repeat" description="LRR 1">
    <location>
        <begin position="35"/>
        <end position="58"/>
    </location>
</feature>
<feature type="repeat" description="LRR 2">
    <location>
        <begin position="59"/>
        <end position="79"/>
    </location>
</feature>
<feature type="repeat" description="LRR 3">
    <location>
        <begin position="81"/>
        <end position="103"/>
    </location>
</feature>
<feature type="repeat" description="LRR 4">
    <location>
        <begin position="104"/>
        <end position="127"/>
    </location>
</feature>
<feature type="repeat" description="LRR 5">
    <location>
        <begin position="128"/>
        <end position="151"/>
    </location>
</feature>
<feature type="repeat" description="LRR 6">
    <location>
        <begin position="153"/>
        <end position="175"/>
    </location>
</feature>
<feature type="repeat" description="LRR 7">
    <location>
        <begin position="176"/>
        <end position="199"/>
    </location>
</feature>
<feature type="repeat" description="LRR 8">
    <location>
        <begin position="201"/>
        <end position="223"/>
    </location>
</feature>
<feature type="repeat" description="LRR 9">
    <location>
        <begin position="224"/>
        <end position="247"/>
    </location>
</feature>
<feature type="repeat" description="LRR 10">
    <location>
        <begin position="248"/>
        <end position="270"/>
    </location>
</feature>
<feature type="repeat" description="LRR 11">
    <location>
        <begin position="272"/>
        <end position="294"/>
    </location>
</feature>
<feature type="repeat" description="LRR 12">
    <location>
        <begin position="318"/>
        <end position="341"/>
    </location>
</feature>
<feature type="repeat" description="LRR 13">
    <location>
        <begin position="342"/>
        <end position="363"/>
    </location>
</feature>
<feature type="repeat" description="LRR 14">
    <location>
        <begin position="364"/>
        <end position="387"/>
    </location>
</feature>
<feature type="repeat" description="LRR 15">
    <location>
        <begin position="388"/>
        <end position="411"/>
    </location>
</feature>
<feature type="repeat" description="LRR 16">
    <location>
        <begin position="413"/>
        <end position="435"/>
    </location>
</feature>
<feature type="modified residue" description="Phosphoserine" evidence="2">
    <location>
        <position position="920"/>
    </location>
</feature>
<feature type="glycosylation site" description="N-linked (GlcNAc...) asparagine" evidence="3">
    <location>
        <position position="68"/>
    </location>
</feature>
<feature type="glycosylation site" description="N-linked (GlcNAc...) asparagine" evidence="3">
    <location>
        <position position="199"/>
    </location>
</feature>
<feature type="glycosylation site" description="N-linked (GlcNAc...) asparagine" evidence="3">
    <location>
        <position position="294"/>
    </location>
</feature>
<feature type="glycosylation site" description="N-linked (GlcNAc...) asparagine" evidence="3">
    <location>
        <position position="314"/>
    </location>
</feature>
<feature type="disulfide bond" evidence="4">
    <location>
        <begin position="29"/>
        <end position="35"/>
    </location>
</feature>
<feature type="disulfide bond" evidence="4">
    <location>
        <begin position="33"/>
        <end position="43"/>
    </location>
</feature>
<feature type="disulfide bond" evidence="4">
    <location>
        <begin position="339"/>
        <end position="364"/>
    </location>
</feature>
<feature type="disulfide bond" evidence="4">
    <location>
        <begin position="470"/>
        <end position="522"/>
    </location>
</feature>
<feature type="disulfide bond" evidence="4">
    <location>
        <begin position="471"/>
        <end position="476"/>
    </location>
</feature>
<feature type="disulfide bond" evidence="4">
    <location>
        <begin position="618"/>
        <end position="693"/>
    </location>
</feature>
<reference key="1">
    <citation type="journal article" date="2009" name="Genome Biol.">
        <title>A whole-genome assembly of the domestic cow, Bos taurus.</title>
        <authorList>
            <person name="Zimin A.V."/>
            <person name="Delcher A.L."/>
            <person name="Florea L."/>
            <person name="Kelley D.R."/>
            <person name="Schatz M.C."/>
            <person name="Puiu D."/>
            <person name="Hanrahan F."/>
            <person name="Pertea G."/>
            <person name="Van Tassell C.P."/>
            <person name="Sonstegard T.S."/>
            <person name="Marcais G."/>
            <person name="Roberts M."/>
            <person name="Subramanian P."/>
            <person name="Yorke J.A."/>
            <person name="Salzberg S.L."/>
        </authorList>
    </citation>
    <scope>NUCLEOTIDE SEQUENCE [LARGE SCALE GENOMIC DNA]</scope>
    <source>
        <strain>Hereford</strain>
    </source>
</reference>
<gene>
    <name type="primary">LGR4</name>
</gene>
<name>LGR4_BOVIN</name>
<evidence type="ECO:0000250" key="1">
    <source>
        <dbReference type="UniProtKB" id="A2ARI4"/>
    </source>
</evidence>
<evidence type="ECO:0000250" key="2">
    <source>
        <dbReference type="UniProtKB" id="Q9BXB1"/>
    </source>
</evidence>
<evidence type="ECO:0000255" key="3"/>
<evidence type="ECO:0000255" key="4">
    <source>
        <dbReference type="PROSITE-ProRule" id="PRU00521"/>
    </source>
</evidence>
<proteinExistence type="inferred from homology"/>
<dbReference type="EMBL" id="DAAA02041144">
    <property type="status" value="NOT_ANNOTATED_CDS"/>
    <property type="molecule type" value="Genomic_DNA"/>
</dbReference>
<dbReference type="RefSeq" id="NP_001192440.1">
    <property type="nucleotide sequence ID" value="NM_001205511.1"/>
</dbReference>
<dbReference type="SMR" id="F1MLX5"/>
<dbReference type="FunCoup" id="F1MLX5">
    <property type="interactions" value="380"/>
</dbReference>
<dbReference type="STRING" id="9913.ENSBTAP00000058722"/>
<dbReference type="GlyCosmos" id="F1MLX5">
    <property type="glycosylation" value="4 sites, No reported glycans"/>
</dbReference>
<dbReference type="GlyGen" id="F1MLX5">
    <property type="glycosylation" value="4 sites"/>
</dbReference>
<dbReference type="PaxDb" id="9913-ENSBTAP00000003370"/>
<dbReference type="Ensembl" id="ENSBTAT00000073630.2">
    <property type="protein sequence ID" value="ENSBTAP00000058722.1"/>
    <property type="gene ID" value="ENSBTAG00000002606.7"/>
</dbReference>
<dbReference type="GeneID" id="505423"/>
<dbReference type="KEGG" id="bta:505423"/>
<dbReference type="CTD" id="55366"/>
<dbReference type="VEuPathDB" id="HostDB:ENSBTAG00000002606"/>
<dbReference type="VGNC" id="VGNC:30861">
    <property type="gene designation" value="LGR4"/>
</dbReference>
<dbReference type="eggNOG" id="KOG0619">
    <property type="taxonomic scope" value="Eukaryota"/>
</dbReference>
<dbReference type="eggNOG" id="KOG2087">
    <property type="taxonomic scope" value="Eukaryota"/>
</dbReference>
<dbReference type="GeneTree" id="ENSGT00940000157925"/>
<dbReference type="HOGENOM" id="CLU_006843_0_0_1"/>
<dbReference type="InParanoid" id="F1MLX5"/>
<dbReference type="OMA" id="PPGNCSM"/>
<dbReference type="OrthoDB" id="1883493at2759"/>
<dbReference type="TreeFam" id="TF316814"/>
<dbReference type="Proteomes" id="UP000009136">
    <property type="component" value="Chromosome 15"/>
</dbReference>
<dbReference type="Bgee" id="ENSBTAG00000002606">
    <property type="expression patterns" value="Expressed in abomasum and 106 other cell types or tissues"/>
</dbReference>
<dbReference type="GO" id="GO:0031012">
    <property type="term" value="C:extracellular matrix"/>
    <property type="evidence" value="ECO:0000318"/>
    <property type="project" value="GO_Central"/>
</dbReference>
<dbReference type="GO" id="GO:0005615">
    <property type="term" value="C:extracellular space"/>
    <property type="evidence" value="ECO:0000318"/>
    <property type="project" value="GO_Central"/>
</dbReference>
<dbReference type="GO" id="GO:0005886">
    <property type="term" value="C:plasma membrane"/>
    <property type="evidence" value="ECO:0000250"/>
    <property type="project" value="UniProtKB"/>
</dbReference>
<dbReference type="GO" id="GO:0016500">
    <property type="term" value="F:protein-hormone receptor activity"/>
    <property type="evidence" value="ECO:0007669"/>
    <property type="project" value="InterPro"/>
</dbReference>
<dbReference type="GO" id="GO:0004888">
    <property type="term" value="F:transmembrane signaling receptor activity"/>
    <property type="evidence" value="ECO:0000250"/>
    <property type="project" value="UniProtKB"/>
</dbReference>
<dbReference type="GO" id="GO:0030282">
    <property type="term" value="P:bone mineralization"/>
    <property type="evidence" value="ECO:0000250"/>
    <property type="project" value="UniProtKB"/>
</dbReference>
<dbReference type="GO" id="GO:0046849">
    <property type="term" value="P:bone remodeling"/>
    <property type="evidence" value="ECO:0000250"/>
    <property type="project" value="UniProtKB"/>
</dbReference>
<dbReference type="GO" id="GO:0032922">
    <property type="term" value="P:circadian regulation of gene expression"/>
    <property type="evidence" value="ECO:0000250"/>
    <property type="project" value="UniProtKB"/>
</dbReference>
<dbReference type="GO" id="GO:0048565">
    <property type="term" value="P:digestive tract development"/>
    <property type="evidence" value="ECO:0007669"/>
    <property type="project" value="Ensembl"/>
</dbReference>
<dbReference type="GO" id="GO:2001013">
    <property type="term" value="P:epithelial cell proliferation involved in renal tubule morphogenesis"/>
    <property type="evidence" value="ECO:0007669"/>
    <property type="project" value="Ensembl"/>
</dbReference>
<dbReference type="GO" id="GO:0007186">
    <property type="term" value="P:G protein-coupled receptor signaling pathway"/>
    <property type="evidence" value="ECO:0007669"/>
    <property type="project" value="UniProtKB-KW"/>
</dbReference>
<dbReference type="GO" id="GO:0001942">
    <property type="term" value="P:hair follicle development"/>
    <property type="evidence" value="ECO:0007669"/>
    <property type="project" value="Ensembl"/>
</dbReference>
<dbReference type="GO" id="GO:0045087">
    <property type="term" value="P:innate immune response"/>
    <property type="evidence" value="ECO:0007669"/>
    <property type="project" value="UniProtKB-KW"/>
</dbReference>
<dbReference type="GO" id="GO:0036335">
    <property type="term" value="P:intestinal stem cell homeostasis"/>
    <property type="evidence" value="ECO:0007669"/>
    <property type="project" value="Ensembl"/>
</dbReference>
<dbReference type="GO" id="GO:0030539">
    <property type="term" value="P:male genitalia development"/>
    <property type="evidence" value="ECO:0007669"/>
    <property type="project" value="Ensembl"/>
</dbReference>
<dbReference type="GO" id="GO:0072224">
    <property type="term" value="P:metanephric glomerulus development"/>
    <property type="evidence" value="ECO:0007669"/>
    <property type="project" value="Ensembl"/>
</dbReference>
<dbReference type="GO" id="GO:0072282">
    <property type="term" value="P:metanephric nephron tubule morphogenesis"/>
    <property type="evidence" value="ECO:0007669"/>
    <property type="project" value="Ensembl"/>
</dbReference>
<dbReference type="GO" id="GO:0120163">
    <property type="term" value="P:negative regulation of cold-induced thermogenesis"/>
    <property type="evidence" value="ECO:0007669"/>
    <property type="project" value="Ensembl"/>
</dbReference>
<dbReference type="GO" id="GO:0001818">
    <property type="term" value="P:negative regulation of cytokine production"/>
    <property type="evidence" value="ECO:0000250"/>
    <property type="project" value="UniProtKB"/>
</dbReference>
<dbReference type="GO" id="GO:0034122">
    <property type="term" value="P:negative regulation of toll-like receptor signaling pathway"/>
    <property type="evidence" value="ECO:0000250"/>
    <property type="project" value="UniProtKB"/>
</dbReference>
<dbReference type="GO" id="GO:0001649">
    <property type="term" value="P:osteoblast differentiation"/>
    <property type="evidence" value="ECO:0000250"/>
    <property type="project" value="UniProtKB"/>
</dbReference>
<dbReference type="GO" id="GO:0090190">
    <property type="term" value="P:positive regulation of branching involved in ureteric bud morphogenesis"/>
    <property type="evidence" value="ECO:0007669"/>
    <property type="project" value="Ensembl"/>
</dbReference>
<dbReference type="GO" id="GO:0090263">
    <property type="term" value="P:positive regulation of canonical Wnt signaling pathway"/>
    <property type="evidence" value="ECO:0000250"/>
    <property type="project" value="UniProtKB"/>
</dbReference>
<dbReference type="GO" id="GO:0007283">
    <property type="term" value="P:spermatogenesis"/>
    <property type="evidence" value="ECO:0000250"/>
    <property type="project" value="UniProtKB"/>
</dbReference>
<dbReference type="GO" id="GO:0016055">
    <property type="term" value="P:Wnt signaling pathway"/>
    <property type="evidence" value="ECO:0007669"/>
    <property type="project" value="UniProtKB-KW"/>
</dbReference>
<dbReference type="CDD" id="cd15361">
    <property type="entry name" value="7tmA_LGR4"/>
    <property type="match status" value="1"/>
</dbReference>
<dbReference type="FunFam" id="1.20.1070.10:FF:000028">
    <property type="entry name" value="leucine-rich repeat-containing G-protein coupled receptor 4 isoform X1"/>
    <property type="match status" value="1"/>
</dbReference>
<dbReference type="FunFam" id="3.80.10.10:FF:000028">
    <property type="entry name" value="leucine-rich repeat-containing G-protein coupled receptor 4 isoform X1"/>
    <property type="match status" value="1"/>
</dbReference>
<dbReference type="Gene3D" id="1.20.1070.10">
    <property type="entry name" value="Rhodopsin 7-helix transmembrane proteins"/>
    <property type="match status" value="1"/>
</dbReference>
<dbReference type="Gene3D" id="3.80.10.10">
    <property type="entry name" value="Ribonuclease Inhibitor"/>
    <property type="match status" value="1"/>
</dbReference>
<dbReference type="InterPro" id="IPR000276">
    <property type="entry name" value="GPCR_Rhodpsn"/>
</dbReference>
<dbReference type="InterPro" id="IPR017452">
    <property type="entry name" value="GPCR_Rhodpsn_7TM"/>
</dbReference>
<dbReference type="InterPro" id="IPR002131">
    <property type="entry name" value="Gphrmn_rcpt_fam"/>
</dbReference>
<dbReference type="InterPro" id="IPR001611">
    <property type="entry name" value="Leu-rich_rpt"/>
</dbReference>
<dbReference type="InterPro" id="IPR003591">
    <property type="entry name" value="Leu-rich_rpt_typical-subtyp"/>
</dbReference>
<dbReference type="InterPro" id="IPR032675">
    <property type="entry name" value="LRR_dom_sf"/>
</dbReference>
<dbReference type="InterPro" id="IPR000372">
    <property type="entry name" value="LRRNT"/>
</dbReference>
<dbReference type="PANTHER" id="PTHR24372">
    <property type="entry name" value="GLYCOPROTEIN HORMONE RECEPTOR"/>
    <property type="match status" value="1"/>
</dbReference>
<dbReference type="PANTHER" id="PTHR24372:SF67">
    <property type="entry name" value="LEUCINE-RICH REPEAT-CONTAINING G-PROTEIN COUPLED RECEPTOR 4"/>
    <property type="match status" value="1"/>
</dbReference>
<dbReference type="Pfam" id="PF00001">
    <property type="entry name" value="7tm_1"/>
    <property type="match status" value="1"/>
</dbReference>
<dbReference type="Pfam" id="PF00560">
    <property type="entry name" value="LRR_1"/>
    <property type="match status" value="1"/>
</dbReference>
<dbReference type="Pfam" id="PF13855">
    <property type="entry name" value="LRR_8"/>
    <property type="match status" value="4"/>
</dbReference>
<dbReference type="Pfam" id="PF01462">
    <property type="entry name" value="LRRNT"/>
    <property type="match status" value="1"/>
</dbReference>
<dbReference type="PRINTS" id="PR00373">
    <property type="entry name" value="GLYCHORMONER"/>
</dbReference>
<dbReference type="PRINTS" id="PR00237">
    <property type="entry name" value="GPCRRHODOPSN"/>
</dbReference>
<dbReference type="SMART" id="SM00364">
    <property type="entry name" value="LRR_BAC"/>
    <property type="match status" value="8"/>
</dbReference>
<dbReference type="SMART" id="SM00365">
    <property type="entry name" value="LRR_SD22"/>
    <property type="match status" value="7"/>
</dbReference>
<dbReference type="SMART" id="SM00369">
    <property type="entry name" value="LRR_TYP"/>
    <property type="match status" value="15"/>
</dbReference>
<dbReference type="SMART" id="SM00013">
    <property type="entry name" value="LRRNT"/>
    <property type="match status" value="1"/>
</dbReference>
<dbReference type="SUPFAM" id="SSF81321">
    <property type="entry name" value="Family A G protein-coupled receptor-like"/>
    <property type="match status" value="1"/>
</dbReference>
<dbReference type="SUPFAM" id="SSF52058">
    <property type="entry name" value="L domain-like"/>
    <property type="match status" value="2"/>
</dbReference>
<dbReference type="PROSITE" id="PS50262">
    <property type="entry name" value="G_PROTEIN_RECEP_F1_2"/>
    <property type="match status" value="1"/>
</dbReference>
<dbReference type="PROSITE" id="PS51450">
    <property type="entry name" value="LRR"/>
    <property type="match status" value="15"/>
</dbReference>
<organism>
    <name type="scientific">Bos taurus</name>
    <name type="common">Bovine</name>
    <dbReference type="NCBI Taxonomy" id="9913"/>
    <lineage>
        <taxon>Eukaryota</taxon>
        <taxon>Metazoa</taxon>
        <taxon>Chordata</taxon>
        <taxon>Craniata</taxon>
        <taxon>Vertebrata</taxon>
        <taxon>Euteleostomi</taxon>
        <taxon>Mammalia</taxon>
        <taxon>Eutheria</taxon>
        <taxon>Laurasiatheria</taxon>
        <taxon>Artiodactyla</taxon>
        <taxon>Ruminantia</taxon>
        <taxon>Pecora</taxon>
        <taxon>Bovidae</taxon>
        <taxon>Bovinae</taxon>
        <taxon>Bos</taxon>
    </lineage>
</organism>
<protein>
    <recommendedName>
        <fullName>Leucine-rich repeat-containing G-protein coupled receptor 4</fullName>
    </recommendedName>
</protein>